<feature type="chain" id="PRO_0000411542" description="Ribosome maturation factor RimM">
    <location>
        <begin position="1"/>
        <end position="172"/>
    </location>
</feature>
<feature type="domain" description="PRC barrel" evidence="1">
    <location>
        <begin position="96"/>
        <end position="168"/>
    </location>
</feature>
<proteinExistence type="inferred from homology"/>
<gene>
    <name evidence="1" type="primary">rimM</name>
    <name type="ordered locus">SPs1281</name>
</gene>
<sequence>MEYFNVGKIVNTQGLQGEMRVLSVSDFAEERFKKGSQLALFDDKDRFVQEVTIVSHRKQKHFDIIKLKDMYHINAIEKYKGYTLKVSKDNQGDLQEGEFYYHQIIGMAVYEKDRLIGYVKEILQPGANDVWVVKRQGKRDLLLPYIPPVVLNVDVPNKRVDVELMEGLDDED</sequence>
<evidence type="ECO:0000255" key="1">
    <source>
        <dbReference type="HAMAP-Rule" id="MF_00014"/>
    </source>
</evidence>
<accession>P0DF05</accession>
<accession>Q8K7X4</accession>
<comment type="function">
    <text evidence="1">An accessory protein needed during the final step in the assembly of 30S ribosomal subunit, possibly for assembly of the head region. Essential for efficient processing of 16S rRNA. May be needed both before and after RbfA during the maturation of 16S rRNA. It has affinity for free ribosomal 30S subunits but not for 70S ribosomes.</text>
</comment>
<comment type="subunit">
    <text evidence="1">Binds ribosomal protein uS19.</text>
</comment>
<comment type="subcellular location">
    <subcellularLocation>
        <location evidence="1">Cytoplasm</location>
    </subcellularLocation>
</comment>
<comment type="domain">
    <text evidence="1">The PRC barrel domain binds ribosomal protein uS19.</text>
</comment>
<comment type="similarity">
    <text evidence="1">Belongs to the RimM family.</text>
</comment>
<keyword id="KW-0143">Chaperone</keyword>
<keyword id="KW-0963">Cytoplasm</keyword>
<keyword id="KW-0690">Ribosome biogenesis</keyword>
<keyword id="KW-0698">rRNA processing</keyword>
<protein>
    <recommendedName>
        <fullName evidence="1">Ribosome maturation factor RimM</fullName>
    </recommendedName>
</protein>
<dbReference type="EMBL" id="BA000034">
    <property type="protein sequence ID" value="BAC64376.1"/>
    <property type="molecule type" value="Genomic_DNA"/>
</dbReference>
<dbReference type="RefSeq" id="WP_002994772.1">
    <property type="nucleotide sequence ID" value="NC_004606.1"/>
</dbReference>
<dbReference type="SMR" id="P0DF05"/>
<dbReference type="GeneID" id="69901042"/>
<dbReference type="KEGG" id="sps:SPs1281"/>
<dbReference type="HOGENOM" id="CLU_077636_3_1_9"/>
<dbReference type="GO" id="GO:0005737">
    <property type="term" value="C:cytoplasm"/>
    <property type="evidence" value="ECO:0007669"/>
    <property type="project" value="UniProtKB-SubCell"/>
</dbReference>
<dbReference type="GO" id="GO:0005840">
    <property type="term" value="C:ribosome"/>
    <property type="evidence" value="ECO:0007669"/>
    <property type="project" value="InterPro"/>
</dbReference>
<dbReference type="GO" id="GO:0043022">
    <property type="term" value="F:ribosome binding"/>
    <property type="evidence" value="ECO:0007669"/>
    <property type="project" value="InterPro"/>
</dbReference>
<dbReference type="GO" id="GO:0042274">
    <property type="term" value="P:ribosomal small subunit biogenesis"/>
    <property type="evidence" value="ECO:0007669"/>
    <property type="project" value="UniProtKB-UniRule"/>
</dbReference>
<dbReference type="GO" id="GO:0006364">
    <property type="term" value="P:rRNA processing"/>
    <property type="evidence" value="ECO:0007669"/>
    <property type="project" value="UniProtKB-UniRule"/>
</dbReference>
<dbReference type="Gene3D" id="2.30.30.240">
    <property type="entry name" value="PRC-barrel domain"/>
    <property type="match status" value="1"/>
</dbReference>
<dbReference type="Gene3D" id="2.40.30.60">
    <property type="entry name" value="RimM"/>
    <property type="match status" value="1"/>
</dbReference>
<dbReference type="HAMAP" id="MF_00014">
    <property type="entry name" value="Ribosome_mat_RimM"/>
    <property type="match status" value="1"/>
</dbReference>
<dbReference type="InterPro" id="IPR027275">
    <property type="entry name" value="PRC-brl_dom"/>
</dbReference>
<dbReference type="InterPro" id="IPR011033">
    <property type="entry name" value="PRC_barrel-like_sf"/>
</dbReference>
<dbReference type="InterPro" id="IPR011961">
    <property type="entry name" value="RimM"/>
</dbReference>
<dbReference type="InterPro" id="IPR002676">
    <property type="entry name" value="RimM_N"/>
</dbReference>
<dbReference type="InterPro" id="IPR036976">
    <property type="entry name" value="RimM_N_sf"/>
</dbReference>
<dbReference type="InterPro" id="IPR009000">
    <property type="entry name" value="Transl_B-barrel_sf"/>
</dbReference>
<dbReference type="NCBIfam" id="TIGR02273">
    <property type="entry name" value="16S_RimM"/>
    <property type="match status" value="1"/>
</dbReference>
<dbReference type="PANTHER" id="PTHR33692">
    <property type="entry name" value="RIBOSOME MATURATION FACTOR RIMM"/>
    <property type="match status" value="1"/>
</dbReference>
<dbReference type="PANTHER" id="PTHR33692:SF1">
    <property type="entry name" value="RIBOSOME MATURATION FACTOR RIMM"/>
    <property type="match status" value="1"/>
</dbReference>
<dbReference type="Pfam" id="PF05239">
    <property type="entry name" value="PRC"/>
    <property type="match status" value="1"/>
</dbReference>
<dbReference type="Pfam" id="PF01782">
    <property type="entry name" value="RimM"/>
    <property type="match status" value="1"/>
</dbReference>
<dbReference type="SUPFAM" id="SSF50346">
    <property type="entry name" value="PRC-barrel domain"/>
    <property type="match status" value="1"/>
</dbReference>
<dbReference type="SUPFAM" id="SSF50447">
    <property type="entry name" value="Translation proteins"/>
    <property type="match status" value="1"/>
</dbReference>
<reference key="1">
    <citation type="journal article" date="2003" name="Genome Res.">
        <title>Genome sequence of an M3 strain of Streptococcus pyogenes reveals a large-scale genomic rearrangement in invasive strains and new insights into phage evolution.</title>
        <authorList>
            <person name="Nakagawa I."/>
            <person name="Kurokawa K."/>
            <person name="Yamashita A."/>
            <person name="Nakata M."/>
            <person name="Tomiyasu Y."/>
            <person name="Okahashi N."/>
            <person name="Kawabata S."/>
            <person name="Yamazaki K."/>
            <person name="Shiba T."/>
            <person name="Yasunaga T."/>
            <person name="Hayashi H."/>
            <person name="Hattori M."/>
            <person name="Hamada S."/>
        </authorList>
    </citation>
    <scope>NUCLEOTIDE SEQUENCE [LARGE SCALE GENOMIC DNA]</scope>
    <source>
        <strain>SSI-1</strain>
    </source>
</reference>
<organism>
    <name type="scientific">Streptococcus pyogenes serotype M3 (strain SSI-1)</name>
    <dbReference type="NCBI Taxonomy" id="193567"/>
    <lineage>
        <taxon>Bacteria</taxon>
        <taxon>Bacillati</taxon>
        <taxon>Bacillota</taxon>
        <taxon>Bacilli</taxon>
        <taxon>Lactobacillales</taxon>
        <taxon>Streptococcaceae</taxon>
        <taxon>Streptococcus</taxon>
    </lineage>
</organism>
<name>RIMM_STRPQ</name>